<protein>
    <recommendedName>
        <fullName evidence="1">Probable chemoreceptor glutamine deamidase CheD</fullName>
        <ecNumber evidence="1">3.5.1.44</ecNumber>
    </recommendedName>
</protein>
<proteinExistence type="inferred from homology"/>
<keyword id="KW-0145">Chemotaxis</keyword>
<keyword id="KW-0378">Hydrolase</keyword>
<feature type="chain" id="PRO_1000184930" description="Probable chemoreceptor glutamine deamidase CheD">
    <location>
        <begin position="1"/>
        <end position="233"/>
    </location>
</feature>
<reference key="1">
    <citation type="journal article" date="2008" name="PLoS ONE">
        <title>A recalibrated molecular clock and independent origins for the cholera pandemic clones.</title>
        <authorList>
            <person name="Feng L."/>
            <person name="Reeves P.R."/>
            <person name="Lan R."/>
            <person name="Ren Y."/>
            <person name="Gao C."/>
            <person name="Zhou Z."/>
            <person name="Ren Y."/>
            <person name="Cheng J."/>
            <person name="Wang W."/>
            <person name="Wang J."/>
            <person name="Qian W."/>
            <person name="Li D."/>
            <person name="Wang L."/>
        </authorList>
    </citation>
    <scope>NUCLEOTIDE SEQUENCE [LARGE SCALE GENOMIC DNA]</scope>
    <source>
        <strain>M66-2</strain>
    </source>
</reference>
<name>CHED_VIBCM</name>
<evidence type="ECO:0000255" key="1">
    <source>
        <dbReference type="HAMAP-Rule" id="MF_01440"/>
    </source>
</evidence>
<gene>
    <name evidence="1" type="primary">cheD</name>
    <name type="ordered locus">VCM66_A1047</name>
</gene>
<dbReference type="EC" id="3.5.1.44" evidence="1"/>
<dbReference type="EMBL" id="CP001234">
    <property type="protein sequence ID" value="ACP08006.1"/>
    <property type="molecule type" value="Genomic_DNA"/>
</dbReference>
<dbReference type="SMR" id="C3LX01"/>
<dbReference type="KEGG" id="vcm:VCM66_A1047"/>
<dbReference type="HOGENOM" id="CLU_087854_0_0_6"/>
<dbReference type="Proteomes" id="UP000001217">
    <property type="component" value="Chromosome II"/>
</dbReference>
<dbReference type="GO" id="GO:0050568">
    <property type="term" value="F:protein-glutamine glutaminase activity"/>
    <property type="evidence" value="ECO:0007669"/>
    <property type="project" value="UniProtKB-UniRule"/>
</dbReference>
<dbReference type="GO" id="GO:0006935">
    <property type="term" value="P:chemotaxis"/>
    <property type="evidence" value="ECO:0007669"/>
    <property type="project" value="UniProtKB-UniRule"/>
</dbReference>
<dbReference type="CDD" id="cd16352">
    <property type="entry name" value="CheD"/>
    <property type="match status" value="1"/>
</dbReference>
<dbReference type="FunFam" id="3.30.1330.200:FF:000002">
    <property type="entry name" value="Probable chemoreceptor glutamine deamidase CheD"/>
    <property type="match status" value="1"/>
</dbReference>
<dbReference type="Gene3D" id="3.30.1330.200">
    <property type="match status" value="1"/>
</dbReference>
<dbReference type="HAMAP" id="MF_01440">
    <property type="entry name" value="CheD"/>
    <property type="match status" value="1"/>
</dbReference>
<dbReference type="InterPro" id="IPR038592">
    <property type="entry name" value="CheD-like_sf"/>
</dbReference>
<dbReference type="InterPro" id="IPR005659">
    <property type="entry name" value="Chemorcpt_Glu_NH3ase_CheD"/>
</dbReference>
<dbReference type="InterPro" id="IPR011324">
    <property type="entry name" value="Cytotoxic_necrot_fac-like_cat"/>
</dbReference>
<dbReference type="NCBIfam" id="NF010016">
    <property type="entry name" value="PRK13493.1"/>
    <property type="match status" value="1"/>
</dbReference>
<dbReference type="PANTHER" id="PTHR35147">
    <property type="entry name" value="CHEMORECEPTOR GLUTAMINE DEAMIDASE CHED-RELATED"/>
    <property type="match status" value="1"/>
</dbReference>
<dbReference type="PANTHER" id="PTHR35147:SF2">
    <property type="entry name" value="CHEMORECEPTOR GLUTAMINE DEAMIDASE CHED-RELATED"/>
    <property type="match status" value="1"/>
</dbReference>
<dbReference type="Pfam" id="PF03975">
    <property type="entry name" value="CheD"/>
    <property type="match status" value="1"/>
</dbReference>
<dbReference type="SUPFAM" id="SSF64438">
    <property type="entry name" value="CNF1/YfiH-like putative cysteine hydrolases"/>
    <property type="match status" value="1"/>
</dbReference>
<sequence length="233" mass="26664">MLVVAVRFSIIWDILFMSDSKLATKRKLKQEEAKGQYYRFNHPSDHRHWVKVMPGGVYATSDQEIIHTGLGSCVSACAWDIEMKVGGMNHFLLPFNNQFESQHWHPQALLSDSSRYGCYAMEVLINRLLSMGAERERLKFKLFGGAHLMGYQSLVGEKNVEFVLEYAKREKLNVVAQDLGGAQPRKLLFDPQTGQAWVKRIGFSSAHAIKQDEELYQHSIDKQIPSDDVELFQ</sequence>
<comment type="function">
    <text evidence="1">Probably deamidates glutamine residues to glutamate on methyl-accepting chemotaxis receptors (MCPs), playing an important role in chemotaxis.</text>
</comment>
<comment type="catalytic activity">
    <reaction evidence="1">
        <text>L-glutaminyl-[protein] + H2O = L-glutamyl-[protein] + NH4(+)</text>
        <dbReference type="Rhea" id="RHEA:16441"/>
        <dbReference type="Rhea" id="RHEA-COMP:10207"/>
        <dbReference type="Rhea" id="RHEA-COMP:10208"/>
        <dbReference type="ChEBI" id="CHEBI:15377"/>
        <dbReference type="ChEBI" id="CHEBI:28938"/>
        <dbReference type="ChEBI" id="CHEBI:29973"/>
        <dbReference type="ChEBI" id="CHEBI:30011"/>
        <dbReference type="EC" id="3.5.1.44"/>
    </reaction>
</comment>
<comment type="similarity">
    <text evidence="1">Belongs to the CheD family.</text>
</comment>
<organism>
    <name type="scientific">Vibrio cholerae serotype O1 (strain M66-2)</name>
    <dbReference type="NCBI Taxonomy" id="579112"/>
    <lineage>
        <taxon>Bacteria</taxon>
        <taxon>Pseudomonadati</taxon>
        <taxon>Pseudomonadota</taxon>
        <taxon>Gammaproteobacteria</taxon>
        <taxon>Vibrionales</taxon>
        <taxon>Vibrionaceae</taxon>
        <taxon>Vibrio</taxon>
    </lineage>
</organism>
<accession>C3LX01</accession>